<accession>Q5NGF3</accession>
<gene>
    <name evidence="1" type="primary">folD</name>
    <name type="ordered locus">FTT_0892</name>
</gene>
<dbReference type="EC" id="1.5.1.5" evidence="1"/>
<dbReference type="EC" id="3.5.4.9" evidence="1"/>
<dbReference type="EMBL" id="AJ749949">
    <property type="protein sequence ID" value="CAG45525.1"/>
    <property type="molecule type" value="Genomic_DNA"/>
</dbReference>
<dbReference type="RefSeq" id="WP_003020886.1">
    <property type="nucleotide sequence ID" value="NZ_CP010290.1"/>
</dbReference>
<dbReference type="RefSeq" id="YP_169889.1">
    <property type="nucleotide sequence ID" value="NC_006570.2"/>
</dbReference>
<dbReference type="PDB" id="3L07">
    <property type="method" value="X-ray"/>
    <property type="resolution" value="1.88 A"/>
    <property type="chains" value="A/B=1-282"/>
</dbReference>
<dbReference type="PDBsum" id="3L07"/>
<dbReference type="SMR" id="Q5NGF3"/>
<dbReference type="IntAct" id="Q5NGF3">
    <property type="interactions" value="1"/>
</dbReference>
<dbReference type="STRING" id="177416.FTT_0892"/>
<dbReference type="DNASU" id="3191934"/>
<dbReference type="EnsemblBacteria" id="CAG45525">
    <property type="protein sequence ID" value="CAG45525"/>
    <property type="gene ID" value="FTT_0892"/>
</dbReference>
<dbReference type="KEGG" id="ftu:FTT_0892"/>
<dbReference type="eggNOG" id="COG0190">
    <property type="taxonomic scope" value="Bacteria"/>
</dbReference>
<dbReference type="OrthoDB" id="9803580at2"/>
<dbReference type="UniPathway" id="UPA00193"/>
<dbReference type="EvolutionaryTrace" id="Q5NGF3"/>
<dbReference type="Proteomes" id="UP000001174">
    <property type="component" value="Chromosome"/>
</dbReference>
<dbReference type="GO" id="GO:0005829">
    <property type="term" value="C:cytosol"/>
    <property type="evidence" value="ECO:0007669"/>
    <property type="project" value="TreeGrafter"/>
</dbReference>
<dbReference type="GO" id="GO:0004477">
    <property type="term" value="F:methenyltetrahydrofolate cyclohydrolase activity"/>
    <property type="evidence" value="ECO:0007669"/>
    <property type="project" value="UniProtKB-UniRule"/>
</dbReference>
<dbReference type="GO" id="GO:0004488">
    <property type="term" value="F:methylenetetrahydrofolate dehydrogenase (NADP+) activity"/>
    <property type="evidence" value="ECO:0007669"/>
    <property type="project" value="UniProtKB-UniRule"/>
</dbReference>
<dbReference type="GO" id="GO:0000105">
    <property type="term" value="P:L-histidine biosynthetic process"/>
    <property type="evidence" value="ECO:0007669"/>
    <property type="project" value="UniProtKB-KW"/>
</dbReference>
<dbReference type="GO" id="GO:0009086">
    <property type="term" value="P:methionine biosynthetic process"/>
    <property type="evidence" value="ECO:0007669"/>
    <property type="project" value="UniProtKB-KW"/>
</dbReference>
<dbReference type="GO" id="GO:0006164">
    <property type="term" value="P:purine nucleotide biosynthetic process"/>
    <property type="evidence" value="ECO:0007669"/>
    <property type="project" value="UniProtKB-KW"/>
</dbReference>
<dbReference type="GO" id="GO:0035999">
    <property type="term" value="P:tetrahydrofolate interconversion"/>
    <property type="evidence" value="ECO:0007669"/>
    <property type="project" value="UniProtKB-UniRule"/>
</dbReference>
<dbReference type="CDD" id="cd01080">
    <property type="entry name" value="NAD_bind_m-THF_DH_Cyclohyd"/>
    <property type="match status" value="1"/>
</dbReference>
<dbReference type="FunFam" id="3.40.50.10860:FF:000001">
    <property type="entry name" value="Bifunctional protein FolD"/>
    <property type="match status" value="1"/>
</dbReference>
<dbReference type="FunFam" id="3.40.50.720:FF:000094">
    <property type="entry name" value="Bifunctional protein FolD"/>
    <property type="match status" value="1"/>
</dbReference>
<dbReference type="Gene3D" id="3.40.50.10860">
    <property type="entry name" value="Leucine Dehydrogenase, chain A, domain 1"/>
    <property type="match status" value="1"/>
</dbReference>
<dbReference type="Gene3D" id="3.40.50.720">
    <property type="entry name" value="NAD(P)-binding Rossmann-like Domain"/>
    <property type="match status" value="1"/>
</dbReference>
<dbReference type="HAMAP" id="MF_01576">
    <property type="entry name" value="THF_DHG_CYH"/>
    <property type="match status" value="1"/>
</dbReference>
<dbReference type="InterPro" id="IPR046346">
    <property type="entry name" value="Aminoacid_DH-like_N_sf"/>
</dbReference>
<dbReference type="InterPro" id="IPR036291">
    <property type="entry name" value="NAD(P)-bd_dom_sf"/>
</dbReference>
<dbReference type="InterPro" id="IPR000672">
    <property type="entry name" value="THF_DH/CycHdrlase"/>
</dbReference>
<dbReference type="InterPro" id="IPR020630">
    <property type="entry name" value="THF_DH/CycHdrlase_cat_dom"/>
</dbReference>
<dbReference type="InterPro" id="IPR020867">
    <property type="entry name" value="THF_DH/CycHdrlase_CS"/>
</dbReference>
<dbReference type="InterPro" id="IPR020631">
    <property type="entry name" value="THF_DH/CycHdrlase_NAD-bd_dom"/>
</dbReference>
<dbReference type="NCBIfam" id="NF008058">
    <property type="entry name" value="PRK10792.1"/>
    <property type="match status" value="1"/>
</dbReference>
<dbReference type="NCBIfam" id="NF010777">
    <property type="entry name" value="PRK14180.1"/>
    <property type="match status" value="1"/>
</dbReference>
<dbReference type="NCBIfam" id="NF010783">
    <property type="entry name" value="PRK14186.1"/>
    <property type="match status" value="1"/>
</dbReference>
<dbReference type="PANTHER" id="PTHR48099:SF5">
    <property type="entry name" value="C-1-TETRAHYDROFOLATE SYNTHASE, CYTOPLASMIC"/>
    <property type="match status" value="1"/>
</dbReference>
<dbReference type="PANTHER" id="PTHR48099">
    <property type="entry name" value="C-1-TETRAHYDROFOLATE SYNTHASE, CYTOPLASMIC-RELATED"/>
    <property type="match status" value="1"/>
</dbReference>
<dbReference type="Pfam" id="PF00763">
    <property type="entry name" value="THF_DHG_CYH"/>
    <property type="match status" value="1"/>
</dbReference>
<dbReference type="Pfam" id="PF02882">
    <property type="entry name" value="THF_DHG_CYH_C"/>
    <property type="match status" value="1"/>
</dbReference>
<dbReference type="PRINTS" id="PR00085">
    <property type="entry name" value="THFDHDRGNASE"/>
</dbReference>
<dbReference type="SUPFAM" id="SSF53223">
    <property type="entry name" value="Aminoacid dehydrogenase-like, N-terminal domain"/>
    <property type="match status" value="1"/>
</dbReference>
<dbReference type="SUPFAM" id="SSF51735">
    <property type="entry name" value="NAD(P)-binding Rossmann-fold domains"/>
    <property type="match status" value="1"/>
</dbReference>
<dbReference type="PROSITE" id="PS00766">
    <property type="entry name" value="THF_DHG_CYH_1"/>
    <property type="match status" value="1"/>
</dbReference>
<dbReference type="PROSITE" id="PS00767">
    <property type="entry name" value="THF_DHG_CYH_2"/>
    <property type="match status" value="1"/>
</dbReference>
<organism>
    <name type="scientific">Francisella tularensis subsp. tularensis (strain SCHU S4 / Schu 4)</name>
    <dbReference type="NCBI Taxonomy" id="177416"/>
    <lineage>
        <taxon>Bacteria</taxon>
        <taxon>Pseudomonadati</taxon>
        <taxon>Pseudomonadota</taxon>
        <taxon>Gammaproteobacteria</taxon>
        <taxon>Thiotrichales</taxon>
        <taxon>Francisellaceae</taxon>
        <taxon>Francisella</taxon>
    </lineage>
</organism>
<comment type="function">
    <text evidence="1">Catalyzes the oxidation of 5,10-methylenetetrahydrofolate to 5,10-methenyltetrahydrofolate and then the hydrolysis of 5,10-methenyltetrahydrofolate to 10-formyltetrahydrofolate.</text>
</comment>
<comment type="catalytic activity">
    <reaction evidence="1">
        <text>(6R)-5,10-methylene-5,6,7,8-tetrahydrofolate + NADP(+) = (6R)-5,10-methenyltetrahydrofolate + NADPH</text>
        <dbReference type="Rhea" id="RHEA:22812"/>
        <dbReference type="ChEBI" id="CHEBI:15636"/>
        <dbReference type="ChEBI" id="CHEBI:57455"/>
        <dbReference type="ChEBI" id="CHEBI:57783"/>
        <dbReference type="ChEBI" id="CHEBI:58349"/>
        <dbReference type="EC" id="1.5.1.5"/>
    </reaction>
</comment>
<comment type="catalytic activity">
    <reaction evidence="1">
        <text>(6R)-5,10-methenyltetrahydrofolate + H2O = (6R)-10-formyltetrahydrofolate + H(+)</text>
        <dbReference type="Rhea" id="RHEA:23700"/>
        <dbReference type="ChEBI" id="CHEBI:15377"/>
        <dbReference type="ChEBI" id="CHEBI:15378"/>
        <dbReference type="ChEBI" id="CHEBI:57455"/>
        <dbReference type="ChEBI" id="CHEBI:195366"/>
        <dbReference type="EC" id="3.5.4.9"/>
    </reaction>
</comment>
<comment type="pathway">
    <text evidence="1">One-carbon metabolism; tetrahydrofolate interconversion.</text>
</comment>
<comment type="subunit">
    <text evidence="2">Homodimer.</text>
</comment>
<comment type="similarity">
    <text evidence="1">Belongs to the tetrahydrofolate dehydrogenase/cyclohydrolase family.</text>
</comment>
<protein>
    <recommendedName>
        <fullName evidence="1">Bifunctional protein FolD</fullName>
    </recommendedName>
    <domain>
        <recommendedName>
            <fullName evidence="1">Methylenetetrahydrofolate dehydrogenase</fullName>
            <ecNumber evidence="1">1.5.1.5</ecNumber>
        </recommendedName>
    </domain>
    <domain>
        <recommendedName>
            <fullName evidence="1">Methenyltetrahydrofolate cyclohydrolase</fullName>
            <ecNumber evidence="1">3.5.4.9</ecNumber>
        </recommendedName>
    </domain>
</protein>
<proteinExistence type="evidence at protein level"/>
<keyword id="KW-0002">3D-structure</keyword>
<keyword id="KW-0028">Amino-acid biosynthesis</keyword>
<keyword id="KW-0368">Histidine biosynthesis</keyword>
<keyword id="KW-0378">Hydrolase</keyword>
<keyword id="KW-0486">Methionine biosynthesis</keyword>
<keyword id="KW-0511">Multifunctional enzyme</keyword>
<keyword id="KW-0521">NADP</keyword>
<keyword id="KW-0554">One-carbon metabolism</keyword>
<keyword id="KW-0560">Oxidoreductase</keyword>
<keyword id="KW-0658">Purine biosynthesis</keyword>
<keyword id="KW-1185">Reference proteome</keyword>
<sequence>MILIDGKSLSKDLKERLATQVQEYKHHTAITPKLVAIIVGNDPASKTYVASKEKACAQVGIDSQVITLPEHTTESELLELIDQLNNDSSVHAILVQLPLPAHINKNNVIYSIKPEKDVDGFHPTNVGRLQLRDKKCLESCTPKGIMTMLREYGIKTEGAYAVVVGASNVVGKPVSQLLLNAKATVTTCHRFTTDLKSHTTKADILIVAVGKPNFITADMVKEGAVVIDVGINHVDGKIVGDVDFAAVKDKVAAITPVPGGVGPMTITELLYNTFQCAQELNR</sequence>
<name>FOLD_FRATT</name>
<reference key="1">
    <citation type="journal article" date="2005" name="Nat. Genet.">
        <title>The complete genome sequence of Francisella tularensis, the causative agent of tularemia.</title>
        <authorList>
            <person name="Larsson P."/>
            <person name="Oyston P.C.F."/>
            <person name="Chain P."/>
            <person name="Chu M.C."/>
            <person name="Duffield M."/>
            <person name="Fuxelius H.-H."/>
            <person name="Garcia E."/>
            <person name="Haelltorp G."/>
            <person name="Johansson D."/>
            <person name="Isherwood K.E."/>
            <person name="Karp P.D."/>
            <person name="Larsson E."/>
            <person name="Liu Y."/>
            <person name="Michell S."/>
            <person name="Prior J."/>
            <person name="Prior R."/>
            <person name="Malfatti S."/>
            <person name="Sjoestedt A."/>
            <person name="Svensson K."/>
            <person name="Thompson N."/>
            <person name="Vergez L."/>
            <person name="Wagg J.K."/>
            <person name="Wren B.W."/>
            <person name="Lindler L.E."/>
            <person name="Andersson S.G.E."/>
            <person name="Forsman M."/>
            <person name="Titball R.W."/>
        </authorList>
    </citation>
    <scope>NUCLEOTIDE SEQUENCE [LARGE SCALE GENOMIC DNA]</scope>
    <source>
        <strain>SCHU S4 / Schu 4</strain>
    </source>
</reference>
<reference key="2">
    <citation type="submission" date="2011-07" db="PDB data bank">
        <title>X-ray crystal structure of methylenetetrahydrofolate dehydrogenase/methenyltetrahydrofolate cyclohydrolase, putative bifunctional protein FolD from Francisella tularensis.</title>
        <authorList>
            <consortium name="Center for structural genomics of infectious diseases (CSGID)"/>
        </authorList>
    </citation>
    <scope>X-RAY CRYSTALLOGRAPHY (1.88 ANGSTROMS) IN COMPLEX WITH PHOSPHATE</scope>
    <scope>SUBUNIT</scope>
</reference>
<feature type="chain" id="PRO_0000268352" description="Bifunctional protein FolD">
    <location>
        <begin position="1"/>
        <end position="282"/>
    </location>
</feature>
<feature type="binding site" evidence="1">
    <location>
        <begin position="165"/>
        <end position="167"/>
    </location>
    <ligand>
        <name>NADP(+)</name>
        <dbReference type="ChEBI" id="CHEBI:58349"/>
    </ligand>
</feature>
<feature type="binding site" evidence="1">
    <location>
        <position position="231"/>
    </location>
    <ligand>
        <name>NADP(+)</name>
        <dbReference type="ChEBI" id="CHEBI:58349"/>
    </ligand>
</feature>
<feature type="helix" evidence="3">
    <location>
        <begin position="6"/>
        <end position="28"/>
    </location>
</feature>
<feature type="strand" evidence="3">
    <location>
        <begin position="33"/>
        <end position="40"/>
    </location>
</feature>
<feature type="helix" evidence="3">
    <location>
        <begin position="43"/>
        <end position="58"/>
    </location>
</feature>
<feature type="strand" evidence="3">
    <location>
        <begin position="62"/>
        <end position="68"/>
    </location>
</feature>
<feature type="helix" evidence="3">
    <location>
        <begin position="74"/>
        <end position="85"/>
    </location>
</feature>
<feature type="strand" evidence="3">
    <location>
        <begin position="92"/>
        <end position="95"/>
    </location>
</feature>
<feature type="helix" evidence="3">
    <location>
        <begin position="105"/>
        <end position="111"/>
    </location>
</feature>
<feature type="helix" evidence="3">
    <location>
        <begin position="114"/>
        <end position="116"/>
    </location>
</feature>
<feature type="helix" evidence="3">
    <location>
        <begin position="123"/>
        <end position="131"/>
    </location>
</feature>
<feature type="helix" evidence="3">
    <location>
        <begin position="140"/>
        <end position="151"/>
    </location>
</feature>
<feature type="strand" evidence="3">
    <location>
        <begin position="160"/>
        <end position="164"/>
    </location>
</feature>
<feature type="turn" evidence="3">
    <location>
        <begin position="168"/>
        <end position="170"/>
    </location>
</feature>
<feature type="helix" evidence="3">
    <location>
        <begin position="171"/>
        <end position="180"/>
    </location>
</feature>
<feature type="strand" evidence="3">
    <location>
        <begin position="184"/>
        <end position="188"/>
    </location>
</feature>
<feature type="helix" evidence="3">
    <location>
        <begin position="195"/>
        <end position="199"/>
    </location>
</feature>
<feature type="strand" evidence="3">
    <location>
        <begin position="203"/>
        <end position="207"/>
    </location>
</feature>
<feature type="helix" evidence="3">
    <location>
        <begin position="217"/>
        <end position="219"/>
    </location>
</feature>
<feature type="strand" evidence="3">
    <location>
        <begin position="225"/>
        <end position="228"/>
    </location>
</feature>
<feature type="strand" evidence="3">
    <location>
        <begin position="232"/>
        <end position="234"/>
    </location>
</feature>
<feature type="strand" evidence="3">
    <location>
        <begin position="237"/>
        <end position="239"/>
    </location>
</feature>
<feature type="helix" evidence="3">
    <location>
        <begin position="244"/>
        <end position="247"/>
    </location>
</feature>
<feature type="turn" evidence="3">
    <location>
        <begin position="248"/>
        <end position="250"/>
    </location>
</feature>
<feature type="strand" evidence="3">
    <location>
        <begin position="252"/>
        <end position="254"/>
    </location>
</feature>
<feature type="strand" evidence="3">
    <location>
        <begin position="257"/>
        <end position="261"/>
    </location>
</feature>
<feature type="helix" evidence="3">
    <location>
        <begin position="264"/>
        <end position="279"/>
    </location>
</feature>
<evidence type="ECO:0000255" key="1">
    <source>
        <dbReference type="HAMAP-Rule" id="MF_01576"/>
    </source>
</evidence>
<evidence type="ECO:0000305" key="2">
    <source ref="2"/>
</evidence>
<evidence type="ECO:0007829" key="3">
    <source>
        <dbReference type="PDB" id="3L07"/>
    </source>
</evidence>